<keyword id="KW-0456">Lyase</keyword>
<keyword id="KW-0663">Pyridoxal phosphate</keyword>
<keyword id="KW-1185">Reference proteome</keyword>
<keyword id="KW-0704">Schiff base</keyword>
<feature type="chain" id="PRO_0000109421" description="Pyridoxal 5'-phosphate synthase subunit PdxS">
    <location>
        <begin position="1"/>
        <end position="291"/>
    </location>
</feature>
<feature type="active site" description="Schiff-base intermediate with D-ribose 5-phosphate" evidence="1">
    <location>
        <position position="80"/>
    </location>
</feature>
<feature type="binding site" evidence="1">
    <location>
        <position position="23"/>
    </location>
    <ligand>
        <name>D-ribose 5-phosphate</name>
        <dbReference type="ChEBI" id="CHEBI:78346"/>
    </ligand>
</feature>
<feature type="binding site" evidence="1">
    <location>
        <position position="152"/>
    </location>
    <ligand>
        <name>D-ribose 5-phosphate</name>
        <dbReference type="ChEBI" id="CHEBI:78346"/>
    </ligand>
</feature>
<feature type="binding site" evidence="1">
    <location>
        <position position="164"/>
    </location>
    <ligand>
        <name>D-glyceraldehyde 3-phosphate</name>
        <dbReference type="ChEBI" id="CHEBI:59776"/>
    </ligand>
</feature>
<feature type="binding site" evidence="1">
    <location>
        <position position="213"/>
    </location>
    <ligand>
        <name>D-ribose 5-phosphate</name>
        <dbReference type="ChEBI" id="CHEBI:78346"/>
    </ligand>
</feature>
<feature type="binding site" evidence="1">
    <location>
        <begin position="234"/>
        <end position="235"/>
    </location>
    <ligand>
        <name>D-ribose 5-phosphate</name>
        <dbReference type="ChEBI" id="CHEBI:78346"/>
    </ligand>
</feature>
<evidence type="ECO:0000255" key="1">
    <source>
        <dbReference type="HAMAP-Rule" id="MF_01824"/>
    </source>
</evidence>
<protein>
    <recommendedName>
        <fullName evidence="1">Pyridoxal 5'-phosphate synthase subunit PdxS</fullName>
        <shortName evidence="1">PLP synthase subunit PdxS</shortName>
        <ecNumber evidence="1">4.3.3.6</ecNumber>
    </recommendedName>
    <alternativeName>
        <fullName evidence="1">Pdx1</fullName>
    </alternativeName>
</protein>
<reference key="1">
    <citation type="journal article" date="2001" name="Science">
        <title>Complete genome sequence of a virulent isolate of Streptococcus pneumoniae.</title>
        <authorList>
            <person name="Tettelin H."/>
            <person name="Nelson K.E."/>
            <person name="Paulsen I.T."/>
            <person name="Eisen J.A."/>
            <person name="Read T.D."/>
            <person name="Peterson S.N."/>
            <person name="Heidelberg J.F."/>
            <person name="DeBoy R.T."/>
            <person name="Haft D.H."/>
            <person name="Dodson R.J."/>
            <person name="Durkin A.S."/>
            <person name="Gwinn M.L."/>
            <person name="Kolonay J.F."/>
            <person name="Nelson W.C."/>
            <person name="Peterson J.D."/>
            <person name="Umayam L.A."/>
            <person name="White O."/>
            <person name="Salzberg S.L."/>
            <person name="Lewis M.R."/>
            <person name="Radune D."/>
            <person name="Holtzapple E.K."/>
            <person name="Khouri H.M."/>
            <person name="Wolf A.M."/>
            <person name="Utterback T.R."/>
            <person name="Hansen C.L."/>
            <person name="McDonald L.A."/>
            <person name="Feldblyum T.V."/>
            <person name="Angiuoli S.V."/>
            <person name="Dickinson T."/>
            <person name="Hickey E.K."/>
            <person name="Holt I.E."/>
            <person name="Loftus B.J."/>
            <person name="Yang F."/>
            <person name="Smith H.O."/>
            <person name="Venter J.C."/>
            <person name="Dougherty B.A."/>
            <person name="Morrison D.A."/>
            <person name="Hollingshead S.K."/>
            <person name="Fraser C.M."/>
        </authorList>
    </citation>
    <scope>NUCLEOTIDE SEQUENCE [LARGE SCALE GENOMIC DNA]</scope>
    <source>
        <strain>ATCC BAA-334 / TIGR4</strain>
    </source>
</reference>
<proteinExistence type="inferred from homology"/>
<sequence length="291" mass="31741">MTENRYELNKNLAQMLKGGVIMDVQNPEQARIAEAAGAAAVMALERIPADIRAAGGVSRMSDPKMIKEIQEAVSIPVMAKVRIGHFVEAQILEAIEIDYIDESEVLSPADDRFHVDKKEFQVPFVCGAKDLGEALRRIAEGASMIRTKGEPGTGDIVQAVRHMRMMNQEIRRIQNLREDELYVAAKDLQVPVELVQYVHEHGKLPVVNFAAGGVATPADAALMMQLGAEGVFVGSGIFKSGDPVKRASAIVKAVTNFRNPQILAQISEDLGEAMVGINENEIQILMAERGK</sequence>
<organism>
    <name type="scientific">Streptococcus pneumoniae serotype 4 (strain ATCC BAA-334 / TIGR4)</name>
    <dbReference type="NCBI Taxonomy" id="170187"/>
    <lineage>
        <taxon>Bacteria</taxon>
        <taxon>Bacillati</taxon>
        <taxon>Bacillota</taxon>
        <taxon>Bacilli</taxon>
        <taxon>Lactobacillales</taxon>
        <taxon>Streptococcaceae</taxon>
        <taxon>Streptococcus</taxon>
    </lineage>
</organism>
<comment type="function">
    <text evidence="1">Catalyzes the formation of pyridoxal 5'-phosphate from ribose 5-phosphate (RBP), glyceraldehyde 3-phosphate (G3P) and ammonia. The ammonia is provided by the PdxT subunit. Can also use ribulose 5-phosphate and dihydroxyacetone phosphate as substrates, resulting from enzyme-catalyzed isomerization of RBP and G3P, respectively.</text>
</comment>
<comment type="catalytic activity">
    <reaction evidence="1">
        <text>aldehydo-D-ribose 5-phosphate + D-glyceraldehyde 3-phosphate + L-glutamine = pyridoxal 5'-phosphate + L-glutamate + phosphate + 3 H2O + H(+)</text>
        <dbReference type="Rhea" id="RHEA:31507"/>
        <dbReference type="ChEBI" id="CHEBI:15377"/>
        <dbReference type="ChEBI" id="CHEBI:15378"/>
        <dbReference type="ChEBI" id="CHEBI:29985"/>
        <dbReference type="ChEBI" id="CHEBI:43474"/>
        <dbReference type="ChEBI" id="CHEBI:58273"/>
        <dbReference type="ChEBI" id="CHEBI:58359"/>
        <dbReference type="ChEBI" id="CHEBI:59776"/>
        <dbReference type="ChEBI" id="CHEBI:597326"/>
        <dbReference type="EC" id="4.3.3.6"/>
    </reaction>
</comment>
<comment type="pathway">
    <text evidence="1">Cofactor biosynthesis; pyridoxal 5'-phosphate biosynthesis.</text>
</comment>
<comment type="subunit">
    <text evidence="1">In the presence of PdxT, forms a dodecamer of heterodimers.</text>
</comment>
<comment type="similarity">
    <text evidence="1">Belongs to the PdxS/SNZ family.</text>
</comment>
<name>PDXS_STRPN</name>
<gene>
    <name evidence="1" type="primary">pdxS</name>
    <name type="ordered locus">SP_1468</name>
</gene>
<dbReference type="EC" id="4.3.3.6" evidence="1"/>
<dbReference type="EMBL" id="AE005672">
    <property type="protein sequence ID" value="AAK75562.1"/>
    <property type="molecule type" value="Genomic_DNA"/>
</dbReference>
<dbReference type="PIR" id="A95171">
    <property type="entry name" value="A95171"/>
</dbReference>
<dbReference type="RefSeq" id="WP_000138517.1">
    <property type="nucleotide sequence ID" value="NZ_CP155539.1"/>
</dbReference>
<dbReference type="SMR" id="Q97PX2"/>
<dbReference type="PaxDb" id="170187-SP_1468"/>
<dbReference type="EnsemblBacteria" id="AAK75562">
    <property type="protein sequence ID" value="AAK75562"/>
    <property type="gene ID" value="SP_1468"/>
</dbReference>
<dbReference type="GeneID" id="45653282"/>
<dbReference type="KEGG" id="spn:SP_1468"/>
<dbReference type="eggNOG" id="COG0214">
    <property type="taxonomic scope" value="Bacteria"/>
</dbReference>
<dbReference type="PhylomeDB" id="Q97PX2"/>
<dbReference type="BioCyc" id="SPNE170187:G1FZB-1484-MONOMER"/>
<dbReference type="UniPathway" id="UPA00245"/>
<dbReference type="Proteomes" id="UP000000585">
    <property type="component" value="Chromosome"/>
</dbReference>
<dbReference type="GO" id="GO:0036381">
    <property type="term" value="F:pyridoxal 5'-phosphate synthase (glutamine hydrolysing) activity"/>
    <property type="evidence" value="ECO:0007669"/>
    <property type="project" value="UniProtKB-UniRule"/>
</dbReference>
<dbReference type="GO" id="GO:0006520">
    <property type="term" value="P:amino acid metabolic process"/>
    <property type="evidence" value="ECO:0007669"/>
    <property type="project" value="TreeGrafter"/>
</dbReference>
<dbReference type="GO" id="GO:0042823">
    <property type="term" value="P:pyridoxal phosphate biosynthetic process"/>
    <property type="evidence" value="ECO:0007669"/>
    <property type="project" value="UniProtKB-UniRule"/>
</dbReference>
<dbReference type="GO" id="GO:0008615">
    <property type="term" value="P:pyridoxine biosynthetic process"/>
    <property type="evidence" value="ECO:0007669"/>
    <property type="project" value="TreeGrafter"/>
</dbReference>
<dbReference type="CDD" id="cd04727">
    <property type="entry name" value="pdxS"/>
    <property type="match status" value="1"/>
</dbReference>
<dbReference type="FunFam" id="3.20.20.70:FF:000001">
    <property type="entry name" value="Pyridoxine biosynthesis protein PDX1"/>
    <property type="match status" value="1"/>
</dbReference>
<dbReference type="Gene3D" id="3.20.20.70">
    <property type="entry name" value="Aldolase class I"/>
    <property type="match status" value="1"/>
</dbReference>
<dbReference type="HAMAP" id="MF_01824">
    <property type="entry name" value="PdxS"/>
    <property type="match status" value="1"/>
</dbReference>
<dbReference type="InterPro" id="IPR013785">
    <property type="entry name" value="Aldolase_TIM"/>
</dbReference>
<dbReference type="InterPro" id="IPR001852">
    <property type="entry name" value="PdxS/SNZ"/>
</dbReference>
<dbReference type="InterPro" id="IPR033755">
    <property type="entry name" value="PdxS/SNZ_N"/>
</dbReference>
<dbReference type="InterPro" id="IPR011060">
    <property type="entry name" value="RibuloseP-bd_barrel"/>
</dbReference>
<dbReference type="NCBIfam" id="NF003215">
    <property type="entry name" value="PRK04180.1"/>
    <property type="match status" value="1"/>
</dbReference>
<dbReference type="NCBIfam" id="TIGR00343">
    <property type="entry name" value="pyridoxal 5'-phosphate synthase lyase subunit PdxS"/>
    <property type="match status" value="1"/>
</dbReference>
<dbReference type="PANTHER" id="PTHR31829">
    <property type="entry name" value="PYRIDOXAL 5'-PHOSPHATE SYNTHASE SUBUNIT SNZ1-RELATED"/>
    <property type="match status" value="1"/>
</dbReference>
<dbReference type="PANTHER" id="PTHR31829:SF0">
    <property type="entry name" value="PYRIDOXAL 5'-PHOSPHATE SYNTHASE SUBUNIT SNZ1-RELATED"/>
    <property type="match status" value="1"/>
</dbReference>
<dbReference type="Pfam" id="PF01680">
    <property type="entry name" value="SOR_SNZ"/>
    <property type="match status" value="1"/>
</dbReference>
<dbReference type="PIRSF" id="PIRSF029271">
    <property type="entry name" value="Pdx1"/>
    <property type="match status" value="1"/>
</dbReference>
<dbReference type="SUPFAM" id="SSF51366">
    <property type="entry name" value="Ribulose-phoshate binding barrel"/>
    <property type="match status" value="1"/>
</dbReference>
<dbReference type="PROSITE" id="PS01235">
    <property type="entry name" value="PDXS_SNZ_1"/>
    <property type="match status" value="1"/>
</dbReference>
<dbReference type="PROSITE" id="PS51129">
    <property type="entry name" value="PDXS_SNZ_2"/>
    <property type="match status" value="1"/>
</dbReference>
<accession>Q97PX2</accession>